<proteinExistence type="evidence at transcript level"/>
<keyword id="KW-0007">Acetylation</keyword>
<keyword id="KW-0156">Chromatin regulator</keyword>
<keyword id="KW-0963">Cytoplasm</keyword>
<keyword id="KW-0378">Hydrolase</keyword>
<keyword id="KW-1017">Isopeptide bond</keyword>
<keyword id="KW-0479">Metal-binding</keyword>
<keyword id="KW-0539">Nucleus</keyword>
<keyword id="KW-0597">Phosphoprotein</keyword>
<keyword id="KW-0678">Repressor</keyword>
<keyword id="KW-0804">Transcription</keyword>
<keyword id="KW-0805">Transcription regulation</keyword>
<keyword id="KW-0832">Ubl conjugation</keyword>
<keyword id="KW-0862">Zinc</keyword>
<comment type="function">
    <text evidence="2">Responsible for the deacetylation of lysine residues on the N-terminal part of the core histones (H2A, H2B, H3 and H4). Histone deacetylation gives a tag for epigenetic repression and plays an important role in transcriptional regulation, cell cycle progression and developmental events. Histone deacetylases act via the formation of large multiprotein complexes. Involved in muscle maturation by repressing transcription of myocyte enhancer MEF2C. During muscle differentiation, it shuttles into the cytoplasm, allowing the expression of myocyte enhancer factors (By similarity). Serves as a corepressor of RARA and causes its deacetylation (By similarity). In association with RARA, plays a role in the repression of microRNA-10a and thereby in the inflammatory response (By similarity).</text>
</comment>
<comment type="catalytic activity">
    <reaction>
        <text>N(6)-acetyl-L-lysyl-[histone] + H2O = L-lysyl-[histone] + acetate</text>
        <dbReference type="Rhea" id="RHEA:58196"/>
        <dbReference type="Rhea" id="RHEA-COMP:9845"/>
        <dbReference type="Rhea" id="RHEA-COMP:11338"/>
        <dbReference type="ChEBI" id="CHEBI:15377"/>
        <dbReference type="ChEBI" id="CHEBI:29969"/>
        <dbReference type="ChEBI" id="CHEBI:30089"/>
        <dbReference type="ChEBI" id="CHEBI:61930"/>
        <dbReference type="EC" id="3.5.1.98"/>
    </reaction>
</comment>
<comment type="subunit">
    <text evidence="2 3">Interacts with AHRR, BAHD1, BCOR, HDAC7, HDAC9, CTBP1, MEF2C, NCOR2, NRIP1, PHB2 and a 14-3-3 chaperone protein. Interacts with BCL6, DDIT3/CHOP, GRK5, KDM5B and MYOCD. Interacts with EP300 in the presence of TFAP2C. Interacts with ANKRA2. Interacts with CUL7 (as part of the 3M complex); negatively regulated by ANKRA2. Interacts with ZBTB7B; the interaction allows the recruitment of HDAC4 on CD8 loci for deacetylation and possible inhibition of CD8 genes expression (By similarity). Interacts with RARA (By similarity).</text>
</comment>
<comment type="subcellular location">
    <subcellularLocation>
        <location evidence="1">Nucleus</location>
    </subcellularLocation>
    <subcellularLocation>
        <location evidence="1">Cytoplasm</location>
    </subcellularLocation>
    <text evidence="1">Shuttles between the nucleus and the cytoplasm. In muscle cells, it shuttles into the cytoplasm during myocyte differentiation. The export to cytoplasm depends on the interaction with a 14-3-3 chaperone protein and is due to its phosphorylation at Ser-250 and Ser-489 by AMPK, CaMK1 and SIK1 (By similarity).</text>
</comment>
<comment type="domain">
    <text>The nuclear export sequence mediates the shuttling between the nucleus and the cytoplasm.</text>
</comment>
<comment type="PTM">
    <text evidence="1">Phosphorylated by AMPK, CaMK1, SIK1 and PRKD1 at Ser-250 and Ser-489. The phosphorylation is required for the export to the cytoplasm and inhibition. Phosphorylated by the PKC kinases PKN1 and PKN2, impairing nuclear import (By similarity). Phosphorylated by GRK5, leading to nuclear export of HDAC5 and allowing MEF2-mediated transcription (By similarity).</text>
</comment>
<comment type="PTM">
    <text evidence="1">Ubiquitinated. Polyubiquitination however does not lead to its degradation (By similarity).</text>
</comment>
<comment type="similarity">
    <text evidence="5">Belongs to the histone deacetylase family. HD type 2 subfamily.</text>
</comment>
<name>HDAC5_CRIGR</name>
<reference key="1">
    <citation type="journal article" date="2005" name="Glycobiology">
        <title>Suppressors of alpha(1,3)fucosylation identified by expression cloning in the LEC11B gain-of-function CHO mutant.</title>
        <authorList>
            <person name="Chen W."/>
            <person name="Tang J."/>
            <person name="Stanley P."/>
        </authorList>
    </citation>
    <scope>NUCLEOTIDE SEQUENCE [MRNA]</scope>
    <source>
        <tissue>Ovary</tissue>
    </source>
</reference>
<accession>Q80ZH1</accession>
<dbReference type="EC" id="3.5.1.98"/>
<dbReference type="EMBL" id="AY145846">
    <property type="protein sequence ID" value="AAN46420.1"/>
    <property type="molecule type" value="mRNA"/>
</dbReference>
<dbReference type="RefSeq" id="NP_001233710.1">
    <property type="nucleotide sequence ID" value="NM_001246781.1"/>
</dbReference>
<dbReference type="RefSeq" id="XP_007643219.1">
    <property type="nucleotide sequence ID" value="XM_007645029.2"/>
</dbReference>
<dbReference type="SMR" id="Q80ZH1"/>
<dbReference type="PaxDb" id="10029-NP_001233710.1"/>
<dbReference type="GeneID" id="100689350"/>
<dbReference type="KEGG" id="cge:100689350"/>
<dbReference type="CTD" id="10014"/>
<dbReference type="eggNOG" id="KOG1343">
    <property type="taxonomic scope" value="Eukaryota"/>
</dbReference>
<dbReference type="OrthoDB" id="424012at2759"/>
<dbReference type="Proteomes" id="UP000694386">
    <property type="component" value="Unplaced"/>
</dbReference>
<dbReference type="Proteomes" id="UP001108280">
    <property type="component" value="Chromosome 7"/>
</dbReference>
<dbReference type="GO" id="GO:0005737">
    <property type="term" value="C:cytoplasm"/>
    <property type="evidence" value="ECO:0000250"/>
    <property type="project" value="UniProtKB"/>
</dbReference>
<dbReference type="GO" id="GO:0005634">
    <property type="term" value="C:nucleus"/>
    <property type="evidence" value="ECO:0000250"/>
    <property type="project" value="UniProtKB"/>
</dbReference>
<dbReference type="GO" id="GO:0141221">
    <property type="term" value="F:histone deacetylase activity, hydrolytic mechanism"/>
    <property type="evidence" value="ECO:0007669"/>
    <property type="project" value="UniProtKB-EC"/>
</dbReference>
<dbReference type="GO" id="GO:0046872">
    <property type="term" value="F:metal ion binding"/>
    <property type="evidence" value="ECO:0007669"/>
    <property type="project" value="UniProtKB-KW"/>
</dbReference>
<dbReference type="GO" id="GO:0006325">
    <property type="term" value="P:chromatin organization"/>
    <property type="evidence" value="ECO:0007669"/>
    <property type="project" value="UniProtKB-KW"/>
</dbReference>
<dbReference type="GO" id="GO:0000122">
    <property type="term" value="P:negative regulation of transcription by RNA polymerase II"/>
    <property type="evidence" value="ECO:0007669"/>
    <property type="project" value="InterPro"/>
</dbReference>
<dbReference type="GO" id="GO:0010830">
    <property type="term" value="P:regulation of myotube differentiation"/>
    <property type="evidence" value="ECO:0000250"/>
    <property type="project" value="UniProtKB"/>
</dbReference>
<dbReference type="CDD" id="cd10007">
    <property type="entry name" value="HDAC5"/>
    <property type="match status" value="1"/>
</dbReference>
<dbReference type="FunFam" id="3.40.800.20:FF:000002">
    <property type="entry name" value="Histone deacetylase"/>
    <property type="match status" value="1"/>
</dbReference>
<dbReference type="Gene3D" id="6.10.250.1550">
    <property type="match status" value="1"/>
</dbReference>
<dbReference type="Gene3D" id="3.40.800.20">
    <property type="entry name" value="Histone deacetylase domain"/>
    <property type="match status" value="1"/>
</dbReference>
<dbReference type="InterPro" id="IPR046949">
    <property type="entry name" value="HDAC4/5/7/9"/>
</dbReference>
<dbReference type="InterPro" id="IPR000286">
    <property type="entry name" value="His_deacetylse"/>
</dbReference>
<dbReference type="InterPro" id="IPR023801">
    <property type="entry name" value="His_deacetylse_dom"/>
</dbReference>
<dbReference type="InterPro" id="IPR037138">
    <property type="entry name" value="His_deacetylse_dom_sf"/>
</dbReference>
<dbReference type="InterPro" id="IPR024643">
    <property type="entry name" value="Hist_deacetylase_Gln_rich_N"/>
</dbReference>
<dbReference type="InterPro" id="IPR023696">
    <property type="entry name" value="Ureohydrolase_dom_sf"/>
</dbReference>
<dbReference type="PANTHER" id="PTHR45364:SF12">
    <property type="entry name" value="HISTONE DEACETYLASE"/>
    <property type="match status" value="1"/>
</dbReference>
<dbReference type="PANTHER" id="PTHR45364">
    <property type="entry name" value="HISTONE DEACETYLASE 9-RELATED"/>
    <property type="match status" value="1"/>
</dbReference>
<dbReference type="Pfam" id="PF12203">
    <property type="entry name" value="HDAC4_Gln"/>
    <property type="match status" value="1"/>
</dbReference>
<dbReference type="Pfam" id="PF00850">
    <property type="entry name" value="Hist_deacetyl"/>
    <property type="match status" value="1"/>
</dbReference>
<dbReference type="PIRSF" id="PIRSF037911">
    <property type="entry name" value="HDAC_II_euk"/>
    <property type="match status" value="1"/>
</dbReference>
<dbReference type="PRINTS" id="PR01270">
    <property type="entry name" value="HDASUPER"/>
</dbReference>
<dbReference type="SUPFAM" id="SSF52768">
    <property type="entry name" value="Arginase/deacetylase"/>
    <property type="match status" value="1"/>
</dbReference>
<feature type="chain" id="PRO_0000357050" description="Histone deacetylase 5">
    <location>
        <begin position="1"/>
        <end position="1111"/>
    </location>
</feature>
<feature type="region of interest" description="Disordered" evidence="4">
    <location>
        <begin position="40"/>
        <end position="63"/>
    </location>
</feature>
<feature type="region of interest" description="Disordered" evidence="4">
    <location>
        <begin position="107"/>
        <end position="136"/>
    </location>
</feature>
<feature type="region of interest" description="Disordered" evidence="4">
    <location>
        <begin position="187"/>
        <end position="272"/>
    </location>
</feature>
<feature type="region of interest" description="Disordered" evidence="4">
    <location>
        <begin position="474"/>
        <end position="495"/>
    </location>
</feature>
<feature type="region of interest" description="Disordered" evidence="4">
    <location>
        <begin position="527"/>
        <end position="611"/>
    </location>
</feature>
<feature type="region of interest" description="Disordered" evidence="4">
    <location>
        <begin position="645"/>
        <end position="666"/>
    </location>
</feature>
<feature type="region of interest" description="Histone deacetylase">
    <location>
        <begin position="671"/>
        <end position="1017"/>
    </location>
</feature>
<feature type="region of interest" description="Disordered" evidence="4">
    <location>
        <begin position="1086"/>
        <end position="1111"/>
    </location>
</feature>
<feature type="short sequence motif" description="Nuclear export signal" evidence="1">
    <location>
        <begin position="1070"/>
        <end position="1109"/>
    </location>
</feature>
<feature type="compositionally biased region" description="Basic and acidic residues" evidence="4">
    <location>
        <begin position="238"/>
        <end position="249"/>
    </location>
</feature>
<feature type="compositionally biased region" description="Basic and acidic residues" evidence="4">
    <location>
        <begin position="263"/>
        <end position="272"/>
    </location>
</feature>
<feature type="compositionally biased region" description="Low complexity" evidence="4">
    <location>
        <begin position="485"/>
        <end position="495"/>
    </location>
</feature>
<feature type="compositionally biased region" description="Acidic residues" evidence="4">
    <location>
        <begin position="572"/>
        <end position="610"/>
    </location>
</feature>
<feature type="active site" evidence="1">
    <location>
        <position position="822"/>
    </location>
</feature>
<feature type="binding site" evidence="1">
    <location>
        <position position="685"/>
    </location>
    <ligand>
        <name>Zn(2+)</name>
        <dbReference type="ChEBI" id="CHEBI:29105"/>
    </ligand>
</feature>
<feature type="binding site" evidence="1">
    <location>
        <position position="687"/>
    </location>
    <ligand>
        <name>Zn(2+)</name>
        <dbReference type="ChEBI" id="CHEBI:29105"/>
    </ligand>
</feature>
<feature type="binding site" evidence="1">
    <location>
        <position position="693"/>
    </location>
    <ligand>
        <name>Zn(2+)</name>
        <dbReference type="ChEBI" id="CHEBI:29105"/>
    </ligand>
</feature>
<feature type="binding site" evidence="1">
    <location>
        <position position="770"/>
    </location>
    <ligand>
        <name>Zn(2+)</name>
        <dbReference type="ChEBI" id="CHEBI:29105"/>
    </ligand>
</feature>
<feature type="modified residue" description="Phosphoserine; by AMPK, CaMK1, SIK1 and PKD/PRKD1" evidence="2">
    <location>
        <position position="250"/>
    </location>
</feature>
<feature type="modified residue" description="Phosphothreonine; by PKC" evidence="2">
    <location>
        <position position="283"/>
    </location>
</feature>
<feature type="modified residue" description="Phosphoserine; by AMPK, CaMK1, SIK1 and PKD/PRKD1" evidence="2">
    <location>
        <position position="489"/>
    </location>
</feature>
<feature type="modified residue" description="N6-acetyllysine" evidence="2">
    <location>
        <position position="524"/>
    </location>
</feature>
<feature type="modified residue" description="Phosphoserine" evidence="2">
    <location>
        <position position="600"/>
    </location>
</feature>
<feature type="modified residue" description="Phosphoserine" evidence="2">
    <location>
        <position position="650"/>
    </location>
</feature>
<feature type="modified residue" description="Phosphoserine" evidence="2">
    <location>
        <position position="1097"/>
    </location>
</feature>
<feature type="cross-link" description="Glycyl lysine isopeptide (Lys-Gly) (interchain with G-Cter in SUMO2)" evidence="2">
    <location>
        <position position="35"/>
    </location>
</feature>
<gene>
    <name type="primary">HDAC5</name>
</gene>
<sequence>MNSPNESDGMPGREPSLEILPRTPLHSIPVAVEVKPVLPGAMPSSMGGGGGGSPSPVELRGALAGPMDPALREQQLQQELLVLKQQQQLQKQLLFAEFQKQHDHLTRQHEVQLQKHLKQQQEMLAAKRQQELEQQRQREQQRQEELEKQRLEQQLLILRNKEKSKESAIASTEVKLRLQEFLLSKSKEPTPGSLNHSLPQHPKCWGAHHASLDQSSPPQSGPPGTPPSYKLPLLGPYDSRDDFPLRKTASEPNLKVRSRLKQKVAERRSSPLLRRKDGTVISTFKKRAVEITGTGPGVSSVCNSAPGSGPSSPNSSHSAIAENGFTGSVPNIPTEMLPQHRALPLDSSPNQFSLYTSPSLPNISLGLQATVTVTNSHLTASPKLSTQQEAERQALQSLRQGGTLTGKFMSTSSIPGCLLGVTLEGDTSPHGHASLLQHVLLLEQARQQSTLIAVPLHGQSPLVTGERVATSMRTVGKLPRHRPLSRTQSSPLPQSPQALQQLVMQQQHQQFLEKQKQQQMQLGKILTKTGELPRQPTTHPEETEEELTEQQEALLGEGALTMPREGSTESESTQEDLEEEEDEEEEDEDCIQVKDEEGESGPDEGPDLEESSAGYKKLFTDAQQLQPLQVYQAPLSLATVPHQALGRTQSSPAAPGSMKSPPDQPTKHLFTTGVVYDTFMLKHQCMCGNTHVHPEHAGRIQSIWSRLQETGLLSKCERIRGRKATLDEIQTVHSEYHTLLYGTSPLNRQKLDSKKLLGPISQKMYAMLPCGGIGVDSDTVWNEMHSSSAVRMAVGCLVELAFKVAAGELKNGFAIIRPPGHHAEESTAMGFCFFNSVAITAKLLQQKLNVGKVLIVDWDIHHGNGTQQAFYDDPSVLYISLHRYDNGNFFPGSGAPEEVGGGPGMGYNVNVAWTGGVDPPIGDVEYLTAFRTVVMPIAHEFSPDVVLVSAGFDAVEGHLSPLGGYSVTARCFGHLTRQLMTLAGGRVVLALEGGHDLTAICDASEACVSALLSVELQPLDEAVLQQKPSINAVATLEKVIEIQSKHWSCVQRFATGLGCSLQEAQAGETEEAETVSAMALLSVGAEQAQAVATQEHSPRPAEEPMEQEPTL</sequence>
<evidence type="ECO:0000250" key="1"/>
<evidence type="ECO:0000250" key="2">
    <source>
        <dbReference type="UniProtKB" id="Q9UQL6"/>
    </source>
</evidence>
<evidence type="ECO:0000250" key="3">
    <source>
        <dbReference type="UniProtKB" id="Q9Z2V6"/>
    </source>
</evidence>
<evidence type="ECO:0000256" key="4">
    <source>
        <dbReference type="SAM" id="MobiDB-lite"/>
    </source>
</evidence>
<evidence type="ECO:0000305" key="5"/>
<protein>
    <recommendedName>
        <fullName>Histone deacetylase 5</fullName>
        <shortName>HD5</shortName>
        <ecNumber>3.5.1.98</ecNumber>
    </recommendedName>
</protein>
<organism>
    <name type="scientific">Cricetulus griseus</name>
    <name type="common">Chinese hamster</name>
    <name type="synonym">Cricetulus barabensis griseus</name>
    <dbReference type="NCBI Taxonomy" id="10029"/>
    <lineage>
        <taxon>Eukaryota</taxon>
        <taxon>Metazoa</taxon>
        <taxon>Chordata</taxon>
        <taxon>Craniata</taxon>
        <taxon>Vertebrata</taxon>
        <taxon>Euteleostomi</taxon>
        <taxon>Mammalia</taxon>
        <taxon>Eutheria</taxon>
        <taxon>Euarchontoglires</taxon>
        <taxon>Glires</taxon>
        <taxon>Rodentia</taxon>
        <taxon>Myomorpha</taxon>
        <taxon>Muroidea</taxon>
        <taxon>Cricetidae</taxon>
        <taxon>Cricetinae</taxon>
        <taxon>Cricetulus</taxon>
    </lineage>
</organism>